<reference key="1">
    <citation type="journal article" date="2006" name="Lancet">
        <title>Complete genome sequence of USA300, an epidemic clone of community-acquired meticillin-resistant Staphylococcus aureus.</title>
        <authorList>
            <person name="Diep B.A."/>
            <person name="Gill S.R."/>
            <person name="Chang R.F."/>
            <person name="Phan T.H."/>
            <person name="Chen J.H."/>
            <person name="Davidson M.G."/>
            <person name="Lin F."/>
            <person name="Lin J."/>
            <person name="Carleton H.A."/>
            <person name="Mongodin E.F."/>
            <person name="Sensabaugh G.F."/>
            <person name="Perdreau-Remington F."/>
        </authorList>
    </citation>
    <scope>NUCLEOTIDE SEQUENCE [LARGE SCALE GENOMIC DNA]</scope>
    <source>
        <strain>USA300</strain>
    </source>
</reference>
<dbReference type="EC" id="3.6.4.13" evidence="1"/>
<dbReference type="EMBL" id="CP000255">
    <property type="protein sequence ID" value="ABD22036.1"/>
    <property type="molecule type" value="Genomic_DNA"/>
</dbReference>
<dbReference type="RefSeq" id="WP_001178942.1">
    <property type="nucleotide sequence ID" value="NZ_CP027476.1"/>
</dbReference>
<dbReference type="SMR" id="Q2FF45"/>
<dbReference type="KEGG" id="saa:SAUSA300_2037"/>
<dbReference type="HOGENOM" id="CLU_003041_21_1_9"/>
<dbReference type="OMA" id="FGCQALV"/>
<dbReference type="Proteomes" id="UP000001939">
    <property type="component" value="Chromosome"/>
</dbReference>
<dbReference type="GO" id="GO:0005829">
    <property type="term" value="C:cytosol"/>
    <property type="evidence" value="ECO:0007669"/>
    <property type="project" value="TreeGrafter"/>
</dbReference>
<dbReference type="GO" id="GO:0005840">
    <property type="term" value="C:ribosome"/>
    <property type="evidence" value="ECO:0007669"/>
    <property type="project" value="TreeGrafter"/>
</dbReference>
<dbReference type="GO" id="GO:0005524">
    <property type="term" value="F:ATP binding"/>
    <property type="evidence" value="ECO:0007669"/>
    <property type="project" value="UniProtKB-UniRule"/>
</dbReference>
<dbReference type="GO" id="GO:0016887">
    <property type="term" value="F:ATP hydrolysis activity"/>
    <property type="evidence" value="ECO:0007669"/>
    <property type="project" value="RHEA"/>
</dbReference>
<dbReference type="GO" id="GO:0003724">
    <property type="term" value="F:RNA helicase activity"/>
    <property type="evidence" value="ECO:0007669"/>
    <property type="project" value="UniProtKB-UniRule"/>
</dbReference>
<dbReference type="GO" id="GO:0033592">
    <property type="term" value="F:RNA strand annealing activity"/>
    <property type="evidence" value="ECO:0007669"/>
    <property type="project" value="TreeGrafter"/>
</dbReference>
<dbReference type="GO" id="GO:0009409">
    <property type="term" value="P:response to cold"/>
    <property type="evidence" value="ECO:0007669"/>
    <property type="project" value="TreeGrafter"/>
</dbReference>
<dbReference type="GO" id="GO:0006401">
    <property type="term" value="P:RNA catabolic process"/>
    <property type="evidence" value="ECO:0007669"/>
    <property type="project" value="UniProtKB-UniRule"/>
</dbReference>
<dbReference type="CDD" id="cd00268">
    <property type="entry name" value="DEADc"/>
    <property type="match status" value="1"/>
</dbReference>
<dbReference type="CDD" id="cd18787">
    <property type="entry name" value="SF2_C_DEAD"/>
    <property type="match status" value="1"/>
</dbReference>
<dbReference type="FunFam" id="3.40.50.300:FF:000108">
    <property type="entry name" value="ATP-dependent RNA helicase RhlE"/>
    <property type="match status" value="1"/>
</dbReference>
<dbReference type="Gene3D" id="3.40.50.300">
    <property type="entry name" value="P-loop containing nucleotide triphosphate hydrolases"/>
    <property type="match status" value="2"/>
</dbReference>
<dbReference type="HAMAP" id="MF_01493">
    <property type="entry name" value="DEAD_helicase_CshA"/>
    <property type="match status" value="1"/>
</dbReference>
<dbReference type="InterPro" id="IPR011545">
    <property type="entry name" value="DEAD/DEAH_box_helicase_dom"/>
</dbReference>
<dbReference type="InterPro" id="IPR050547">
    <property type="entry name" value="DEAD_box_RNA_helicases"/>
</dbReference>
<dbReference type="InterPro" id="IPR030880">
    <property type="entry name" value="DEAD_helicase_CshA"/>
</dbReference>
<dbReference type="InterPro" id="IPR014001">
    <property type="entry name" value="Helicase_ATP-bd"/>
</dbReference>
<dbReference type="InterPro" id="IPR001650">
    <property type="entry name" value="Helicase_C-like"/>
</dbReference>
<dbReference type="InterPro" id="IPR027417">
    <property type="entry name" value="P-loop_NTPase"/>
</dbReference>
<dbReference type="InterPro" id="IPR000629">
    <property type="entry name" value="RNA-helicase_DEAD-box_CS"/>
</dbReference>
<dbReference type="InterPro" id="IPR014014">
    <property type="entry name" value="RNA_helicase_DEAD_Q_motif"/>
</dbReference>
<dbReference type="PANTHER" id="PTHR47963">
    <property type="entry name" value="DEAD-BOX ATP-DEPENDENT RNA HELICASE 47, MITOCHONDRIAL"/>
    <property type="match status" value="1"/>
</dbReference>
<dbReference type="PANTHER" id="PTHR47963:SF5">
    <property type="entry name" value="DEAD-BOX ATP-DEPENDENT RNA HELICASE CSHA"/>
    <property type="match status" value="1"/>
</dbReference>
<dbReference type="Pfam" id="PF00270">
    <property type="entry name" value="DEAD"/>
    <property type="match status" value="1"/>
</dbReference>
<dbReference type="Pfam" id="PF00271">
    <property type="entry name" value="Helicase_C"/>
    <property type="match status" value="1"/>
</dbReference>
<dbReference type="SMART" id="SM00487">
    <property type="entry name" value="DEXDc"/>
    <property type="match status" value="1"/>
</dbReference>
<dbReference type="SMART" id="SM00490">
    <property type="entry name" value="HELICc"/>
    <property type="match status" value="1"/>
</dbReference>
<dbReference type="SUPFAM" id="SSF52540">
    <property type="entry name" value="P-loop containing nucleoside triphosphate hydrolases"/>
    <property type="match status" value="1"/>
</dbReference>
<dbReference type="PROSITE" id="PS00039">
    <property type="entry name" value="DEAD_ATP_HELICASE"/>
    <property type="match status" value="1"/>
</dbReference>
<dbReference type="PROSITE" id="PS51192">
    <property type="entry name" value="HELICASE_ATP_BIND_1"/>
    <property type="match status" value="1"/>
</dbReference>
<dbReference type="PROSITE" id="PS51194">
    <property type="entry name" value="HELICASE_CTER"/>
    <property type="match status" value="1"/>
</dbReference>
<dbReference type="PROSITE" id="PS51195">
    <property type="entry name" value="Q_MOTIF"/>
    <property type="match status" value="1"/>
</dbReference>
<sequence>MQNFKELGISDNTVQSLESMGFKEPTPIQKDSIPYALQGIDILGQAQTGTGKTGAFGIPLIEKVVGKQGVQSLILAPTRELAMQVAEQLREFSRGQGVQVVTVFGGMPIERQIKALKKGPQIVVGTPGRVIDHLNRRTLKTDGIHTLILDEADEMMNMGFIDDMRFIMDKIPAVQRQTMLFSATMPKAIQALVQQFMKSPKIIKTMNNEMSDPQIEEFYTIVKELEKFDTFTNFLDVHQPELAIVFGRTKRRVDELTSALISKGYKAEGLHGDITQAKRLEVLKKFKNDQINILVATDVAARGLDISGVSHVYNFDIPQDTESYTHRIGRTGRAGKEGIAVTFVNPIEMDYIRQIEDANGRKMSALRPPHRKEVLQAREDDIKEKVENWMSKESESRLKRISTELLNEYNDVDLVAALLQELVEANDEVEVQLTFEKPLSRKGRNGKPSGSRNRNSKRGNPKFDSKSKRSKGYSSKKKSTKKFDRKEKSSGGSRPMKGRTFADHQK</sequence>
<proteinExistence type="inferred from homology"/>
<accession>Q2FF45</accession>
<organism>
    <name type="scientific">Staphylococcus aureus (strain USA300)</name>
    <dbReference type="NCBI Taxonomy" id="367830"/>
    <lineage>
        <taxon>Bacteria</taxon>
        <taxon>Bacillati</taxon>
        <taxon>Bacillota</taxon>
        <taxon>Bacilli</taxon>
        <taxon>Bacillales</taxon>
        <taxon>Staphylococcaceae</taxon>
        <taxon>Staphylococcus</taxon>
    </lineage>
</organism>
<feature type="chain" id="PRO_0000284826" description="DEAD-box ATP-dependent RNA helicase CshA">
    <location>
        <begin position="1"/>
        <end position="506"/>
    </location>
</feature>
<feature type="domain" description="Helicase ATP-binding" evidence="1">
    <location>
        <begin position="33"/>
        <end position="203"/>
    </location>
</feature>
<feature type="domain" description="Helicase C-terminal" evidence="1">
    <location>
        <begin position="214"/>
        <end position="375"/>
    </location>
</feature>
<feature type="region of interest" description="Disordered" evidence="2">
    <location>
        <begin position="436"/>
        <end position="506"/>
    </location>
</feature>
<feature type="short sequence motif" description="Q motif">
    <location>
        <begin position="2"/>
        <end position="30"/>
    </location>
</feature>
<feature type="short sequence motif" description="DEAD box">
    <location>
        <begin position="150"/>
        <end position="153"/>
    </location>
</feature>
<feature type="compositionally biased region" description="Basic residues" evidence="2">
    <location>
        <begin position="468"/>
        <end position="480"/>
    </location>
</feature>
<feature type="binding site" evidence="1">
    <location>
        <begin position="46"/>
        <end position="53"/>
    </location>
    <ligand>
        <name>ATP</name>
        <dbReference type="ChEBI" id="CHEBI:30616"/>
    </ligand>
</feature>
<name>CSHA_STAA3</name>
<keyword id="KW-0067">ATP-binding</keyword>
<keyword id="KW-0963">Cytoplasm</keyword>
<keyword id="KW-0347">Helicase</keyword>
<keyword id="KW-0378">Hydrolase</keyword>
<keyword id="KW-0547">Nucleotide-binding</keyword>
<keyword id="KW-0694">RNA-binding</keyword>
<keyword id="KW-0346">Stress response</keyword>
<evidence type="ECO:0000255" key="1">
    <source>
        <dbReference type="HAMAP-Rule" id="MF_01493"/>
    </source>
</evidence>
<evidence type="ECO:0000256" key="2">
    <source>
        <dbReference type="SAM" id="MobiDB-lite"/>
    </source>
</evidence>
<protein>
    <recommendedName>
        <fullName evidence="1">DEAD-box ATP-dependent RNA helicase CshA</fullName>
        <ecNumber evidence="1">3.6.4.13</ecNumber>
    </recommendedName>
</protein>
<comment type="function">
    <text evidence="1">DEAD-box RNA helicase possibly involved in RNA degradation. Unwinds dsRNA in both 5'- and 3'-directions, has RNA-dependent ATPase activity.</text>
</comment>
<comment type="catalytic activity">
    <reaction evidence="1">
        <text>ATP + H2O = ADP + phosphate + H(+)</text>
        <dbReference type="Rhea" id="RHEA:13065"/>
        <dbReference type="ChEBI" id="CHEBI:15377"/>
        <dbReference type="ChEBI" id="CHEBI:15378"/>
        <dbReference type="ChEBI" id="CHEBI:30616"/>
        <dbReference type="ChEBI" id="CHEBI:43474"/>
        <dbReference type="ChEBI" id="CHEBI:456216"/>
        <dbReference type="EC" id="3.6.4.13"/>
    </reaction>
</comment>
<comment type="subunit">
    <text evidence="1">Oligomerizes, may be a member of the RNA degradosome.</text>
</comment>
<comment type="subcellular location">
    <subcellularLocation>
        <location evidence="1">Cytoplasm</location>
    </subcellularLocation>
</comment>
<comment type="similarity">
    <text evidence="1">Belongs to the DEAD box helicase family. CshA subfamily.</text>
</comment>
<gene>
    <name evidence="1" type="primary">cshA</name>
    <name type="ordered locus">SAUSA300_2037</name>
</gene>